<sequence>MAQYYPGTSKVAQNRRNFCNPEYELEKLREISDEDVVKILGHRAPGEEYPSVHPPLEEMDEPEDAIREMVEPIDGAKAGDRVRYIQFTDSMYFAPAQPYVRSRAYLCRYRGADAGTLSGRQIIETRERDLEKISKELLETEFFDPARSGVRGKSVHGHSLRLDEDGMMFDMLRRQIYNKDTGRVEMVKNQIGDELDEPVDLGEPLDEETLMNKTTIYRVDGEAYRDDTDAVEIMQRIHVLRSQGGYNPE</sequence>
<protein>
    <recommendedName>
        <fullName evidence="4">Methyl-coenzyme M reductase I subunit gamma</fullName>
        <shortName evidence="4">MCR I gamma</shortName>
        <ecNumber evidence="2 3">2.8.4.1</ecNumber>
    </recommendedName>
    <alternativeName>
        <fullName>Coenzyme-B sulfoethylthiotransferase gamma</fullName>
    </alternativeName>
</protein>
<keyword id="KW-0963">Cytoplasm</keyword>
<keyword id="KW-0903">Direct protein sequencing</keyword>
<keyword id="KW-0484">Methanogenesis</keyword>
<keyword id="KW-1185">Reference proteome</keyword>
<keyword id="KW-0808">Transferase</keyword>
<feature type="initiator methionine" description="Removed" evidence="2">
    <location>
        <position position="1"/>
    </location>
</feature>
<feature type="chain" id="PRO_0000147478" description="Methyl-coenzyme M reductase I subunit gamma">
    <location>
        <begin position="2"/>
        <end position="249"/>
    </location>
</feature>
<feature type="binding site" evidence="1">
    <location>
        <position position="120"/>
    </location>
    <ligand>
        <name>coenzyme M</name>
        <dbReference type="ChEBI" id="CHEBI:58319"/>
    </ligand>
</feature>
<name>MCRG_METTH</name>
<accession>O27233</accession>
<accession>Q50492</accession>
<comment type="function">
    <text evidence="2 3">Component of the methyl-coenzyme M reductase (MCR) I that catalyzes the reductive cleavage of methyl-coenzyme M (CoM-S-CH3 or 2-(methylthio)ethanesulfonate) using coenzyme B (CoB or 7-mercaptoheptanoylthreonine phosphate) as reductant which results in the production of methane and the mixed heterodisulfide of CoB and CoM (CoM-S-S-CoB). This is the final step in methanogenesis.</text>
</comment>
<comment type="catalytic activity">
    <reaction evidence="2 3">
        <text>coenzyme B + methyl-coenzyme M = methane + coenzyme M-coenzyme B heterodisulfide</text>
        <dbReference type="Rhea" id="RHEA:12532"/>
        <dbReference type="ChEBI" id="CHEBI:16183"/>
        <dbReference type="ChEBI" id="CHEBI:58286"/>
        <dbReference type="ChEBI" id="CHEBI:58411"/>
        <dbReference type="ChEBI" id="CHEBI:58596"/>
        <dbReference type="EC" id="2.8.4.1"/>
    </reaction>
    <physiologicalReaction direction="left-to-right" evidence="6">
        <dbReference type="Rhea" id="RHEA:12533"/>
    </physiologicalReaction>
</comment>
<comment type="cofactor">
    <cofactor evidence="1">
        <name>coenzyme F430</name>
        <dbReference type="ChEBI" id="CHEBI:60540"/>
    </cofactor>
    <text evidence="1">Binds 2 coenzyme F430 non-covalently per MCR complex. Coenzyme F430 is a yellow nickel porphinoid. Methyl-coenzyme-M reductase is activated when the enzyme-bound coenzyme F430 is reduced to the Ni(I) oxidation state.</text>
</comment>
<comment type="pathway">
    <text evidence="6">One-carbon metabolism; methyl-coenzyme M reduction; methane from methyl-coenzyme M: step 1/1.</text>
</comment>
<comment type="subunit">
    <text evidence="2">MCR is a hexamer of two alpha, two beta, and two gamma chains, forming a dimer of heterotrimers.</text>
</comment>
<comment type="subcellular location">
    <subcellularLocation>
        <location evidence="1">Cytoplasm</location>
    </subcellularLocation>
</comment>
<comment type="developmental stage">
    <text evidence="1">There are two MCR complexes in this bacteria. MCR II is expressed in the early growth phase. Late growth cells contain mostly MCR I.</text>
</comment>
<comment type="similarity">
    <text evidence="5">Belongs to the methyl-coenzyme M reductase gamma subunit family.</text>
</comment>
<comment type="sequence caution" evidence="5">
    <conflict type="erroneous initiation">
        <sequence resource="EMBL-CDS" id="AAB85654"/>
    </conflict>
</comment>
<reference key="1">
    <citation type="journal article" date="1994" name="J. Bacteriol.">
        <title>Growth phase-dependent transcription of the genes that encode the two methyl coenzyme M reductase isoenzymes and N5-methyltetrahydromethanopterin:coenzyme M methyltransferase in Methanobacterium thermoautotrophicum delta H.</title>
        <authorList>
            <person name="Pihl T.D."/>
            <person name="Sharma S."/>
            <person name="Reeve J.N."/>
        </authorList>
    </citation>
    <scope>NUCLEOTIDE SEQUENCE [GENOMIC DNA]</scope>
    <source>
        <strain>ATCC 29096 / DSM 1053 / JCM 10044 / NBRC 100330 / Delta H</strain>
    </source>
</reference>
<reference key="2">
    <citation type="journal article" date="1997" name="J. Bacteriol.">
        <title>Complete genome sequence of Methanobacterium thermoautotrophicum deltaH: functional analysis and comparative genomics.</title>
        <authorList>
            <person name="Smith D.R."/>
            <person name="Doucette-Stamm L.A."/>
            <person name="Deloughery C."/>
            <person name="Lee H.-M."/>
            <person name="Dubois J."/>
            <person name="Aldredge T."/>
            <person name="Bashirzadeh R."/>
            <person name="Blakely D."/>
            <person name="Cook R."/>
            <person name="Gilbert K."/>
            <person name="Harrison D."/>
            <person name="Hoang L."/>
            <person name="Keagle P."/>
            <person name="Lumm W."/>
            <person name="Pothier B."/>
            <person name="Qiu D."/>
            <person name="Spadafora R."/>
            <person name="Vicare R."/>
            <person name="Wang Y."/>
            <person name="Wierzbowski J."/>
            <person name="Gibson R."/>
            <person name="Jiwani N."/>
            <person name="Caruso A."/>
            <person name="Bush D."/>
            <person name="Safer H."/>
            <person name="Patwell D."/>
            <person name="Prabhakar S."/>
            <person name="McDougall S."/>
            <person name="Shimer G."/>
            <person name="Goyal A."/>
            <person name="Pietrovski S."/>
            <person name="Church G.M."/>
            <person name="Daniels C.J."/>
            <person name="Mao J.-I."/>
            <person name="Rice P."/>
            <person name="Noelling J."/>
            <person name="Reeve J.N."/>
        </authorList>
    </citation>
    <scope>NUCLEOTIDE SEQUENCE [LARGE SCALE GENOMIC DNA]</scope>
    <source>
        <strain>ATCC 29096 / DSM 1053 / JCM 10044 / NBRC 100330 / Delta H</strain>
    </source>
</reference>
<reference key="3">
    <citation type="journal article" date="1990" name="Eur. J. Biochem.">
        <title>Two genetically distinct methyl-coenzyme M reductases in Methanobacterium thermoautotrophicum strain Marburg and delta H.</title>
        <authorList>
            <person name="Rospert S."/>
            <person name="Linder D."/>
            <person name="Ellermann J."/>
            <person name="Thauer R.K."/>
        </authorList>
    </citation>
    <scope>PROTEIN SEQUENCE OF 2-21</scope>
    <scope>FUNCTION</scope>
    <scope>CATALYTIC ACTIVITY</scope>
    <scope>SUBUNIT</scope>
    <source>
        <strain>ATCC 29096 / DSM 1053 / JCM 10044 / NBRC 100330 / Delta H</strain>
    </source>
</reference>
<reference key="4">
    <citation type="journal article" date="1987" name="Biochem. Biophys. Res. Commun.">
        <title>Evidence that the heterodisulfide of coenzyme M and 7-mercaptoheptanoylthreonine phosphate is a product of the methylreductase reaction in Methanobacterium.</title>
        <authorList>
            <person name="Bobik T.A."/>
            <person name="Olson K.D."/>
            <person name="Noll K.M."/>
            <person name="Wolfe R.S."/>
        </authorList>
    </citation>
    <scope>FUNCTION</scope>
    <scope>CATALYTIC ACTIVITY</scope>
    <source>
        <strain>ATCC 29096 / DSM 1053 / JCM 10044 / NBRC 100330 / Delta H</strain>
    </source>
</reference>
<gene>
    <name type="primary">mcrG</name>
    <name type="ordered locus">MTH_1165</name>
</gene>
<dbReference type="EC" id="2.8.4.1" evidence="2 3"/>
<dbReference type="EMBL" id="U10036">
    <property type="protein sequence ID" value="AAA73444.1"/>
    <property type="molecule type" value="Genomic_DNA"/>
</dbReference>
<dbReference type="EMBL" id="AE000666">
    <property type="protein sequence ID" value="AAB85654.1"/>
    <property type="status" value="ALT_INIT"/>
    <property type="molecule type" value="Genomic_DNA"/>
</dbReference>
<dbReference type="PIR" id="C69022">
    <property type="entry name" value="C69022"/>
</dbReference>
<dbReference type="RefSeq" id="WP_048060982.1">
    <property type="nucleotide sequence ID" value="NC_000916.1"/>
</dbReference>
<dbReference type="SMR" id="O27233"/>
<dbReference type="IntAct" id="O27233">
    <property type="interactions" value="1"/>
</dbReference>
<dbReference type="STRING" id="187420.MTH_1165"/>
<dbReference type="PaxDb" id="187420-MTH_1165"/>
<dbReference type="EnsemblBacteria" id="AAB85654">
    <property type="protein sequence ID" value="AAB85654"/>
    <property type="gene ID" value="MTH_1165"/>
</dbReference>
<dbReference type="GeneID" id="1471573"/>
<dbReference type="GeneID" id="77403577"/>
<dbReference type="KEGG" id="mth:MTH_1165"/>
<dbReference type="PATRIC" id="fig|187420.15.peg.1142"/>
<dbReference type="HOGENOM" id="CLU_1092436_0_0_2"/>
<dbReference type="InParanoid" id="O27233"/>
<dbReference type="BioCyc" id="MetaCyc:MCRGMAUTO-MONOMER"/>
<dbReference type="UniPathway" id="UPA00646">
    <property type="reaction ID" value="UER00699"/>
</dbReference>
<dbReference type="Proteomes" id="UP000005223">
    <property type="component" value="Chromosome"/>
</dbReference>
<dbReference type="GO" id="GO:0005737">
    <property type="term" value="C:cytoplasm"/>
    <property type="evidence" value="ECO:0007669"/>
    <property type="project" value="UniProtKB-SubCell"/>
</dbReference>
<dbReference type="GO" id="GO:0050524">
    <property type="term" value="F:coenzyme-B sulfoethylthiotransferase activity"/>
    <property type="evidence" value="ECO:0007669"/>
    <property type="project" value="UniProtKB-EC"/>
</dbReference>
<dbReference type="GO" id="GO:0015948">
    <property type="term" value="P:methanogenesis"/>
    <property type="evidence" value="ECO:0007669"/>
    <property type="project" value="UniProtKB-KW"/>
</dbReference>
<dbReference type="CDD" id="cd00539">
    <property type="entry name" value="MCR_gamma"/>
    <property type="match status" value="1"/>
</dbReference>
<dbReference type="Gene3D" id="3.90.320.20">
    <property type="entry name" value="Methyl-coenzyme M reductase, gamma subunit"/>
    <property type="match status" value="1"/>
</dbReference>
<dbReference type="InterPro" id="IPR009024">
    <property type="entry name" value="Me_CoM_Rdtase_Fd-like_fold"/>
</dbReference>
<dbReference type="InterPro" id="IPR003178">
    <property type="entry name" value="Me_CoM_Rdtase_gsu"/>
</dbReference>
<dbReference type="InterPro" id="IPR036994">
    <property type="entry name" value="Me_CoM_Rdtase_gsu_sf"/>
</dbReference>
<dbReference type="NCBIfam" id="TIGR03259">
    <property type="entry name" value="met_CoM_red_gam"/>
    <property type="match status" value="1"/>
</dbReference>
<dbReference type="Pfam" id="PF02240">
    <property type="entry name" value="MCR_gamma"/>
    <property type="match status" value="1"/>
</dbReference>
<dbReference type="PIRSF" id="PIRSF000264">
    <property type="entry name" value="Meth_CoM_rd_gama"/>
    <property type="match status" value="1"/>
</dbReference>
<dbReference type="SUPFAM" id="SSF55088">
    <property type="entry name" value="Methyl-coenzyme M reductase subunits"/>
    <property type="match status" value="1"/>
</dbReference>
<evidence type="ECO:0000250" key="1">
    <source>
        <dbReference type="UniProtKB" id="P11562"/>
    </source>
</evidence>
<evidence type="ECO:0000269" key="2">
    <source>
    </source>
</evidence>
<evidence type="ECO:0000269" key="3">
    <source>
    </source>
</evidence>
<evidence type="ECO:0000303" key="4">
    <source>
    </source>
</evidence>
<evidence type="ECO:0000305" key="5"/>
<evidence type="ECO:0000305" key="6">
    <source>
    </source>
</evidence>
<proteinExistence type="evidence at protein level"/>
<organism>
    <name type="scientific">Methanothermobacter thermautotrophicus (strain ATCC 29096 / DSM 1053 / JCM 10044 / NBRC 100330 / Delta H)</name>
    <name type="common">Methanobacterium thermoautotrophicum</name>
    <dbReference type="NCBI Taxonomy" id="187420"/>
    <lineage>
        <taxon>Archaea</taxon>
        <taxon>Methanobacteriati</taxon>
        <taxon>Methanobacteriota</taxon>
        <taxon>Methanomada group</taxon>
        <taxon>Methanobacteria</taxon>
        <taxon>Methanobacteriales</taxon>
        <taxon>Methanobacteriaceae</taxon>
        <taxon>Methanothermobacter</taxon>
    </lineage>
</organism>